<keyword id="KW-0025">Alternative splicing</keyword>
<keyword id="KW-1048">Host nucleus</keyword>
<keyword id="KW-0945">Host-virus interaction</keyword>
<keyword id="KW-0813">Transport</keyword>
<keyword id="KW-0946">Virion</keyword>
<organismHost>
    <name type="scientific">Aves</name>
    <dbReference type="NCBI Taxonomy" id="8782"/>
</organismHost>
<organismHost>
    <name type="scientific">Cetacea</name>
    <name type="common">whales</name>
    <dbReference type="NCBI Taxonomy" id="9721"/>
</organismHost>
<organismHost>
    <name type="scientific">Homo sapiens</name>
    <name type="common">Human</name>
    <dbReference type="NCBI Taxonomy" id="9606"/>
</organismHost>
<organismHost>
    <name type="scientific">Phocidae</name>
    <name type="common">true seals</name>
    <dbReference type="NCBI Taxonomy" id="9709"/>
</organismHost>
<organismHost>
    <name type="scientific">Sus scrofa</name>
    <name type="common">Pig</name>
    <dbReference type="NCBI Taxonomy" id="9823"/>
</organismHost>
<proteinExistence type="inferred from homology"/>
<accession>Q2ICQ5</accession>
<organism>
    <name type="scientific">Influenza A virus (strain A/Memphis/101/1972 H3N2)</name>
    <dbReference type="NCBI Taxonomy" id="383583"/>
    <lineage>
        <taxon>Viruses</taxon>
        <taxon>Riboviria</taxon>
        <taxon>Orthornavirae</taxon>
        <taxon>Negarnaviricota</taxon>
        <taxon>Polyploviricotina</taxon>
        <taxon>Insthoviricetes</taxon>
        <taxon>Articulavirales</taxon>
        <taxon>Orthomyxoviridae</taxon>
        <taxon>Alphainfluenzavirus</taxon>
        <taxon>Alphainfluenzavirus influenzae</taxon>
        <taxon>Influenza A virus</taxon>
    </lineage>
</organism>
<dbReference type="EMBL" id="CY008680">
    <property type="protein sequence ID" value="ABD17329.1"/>
    <property type="molecule type" value="Genomic_RNA"/>
</dbReference>
<dbReference type="SMR" id="Q2ICQ5"/>
<dbReference type="Proteomes" id="UP000009189">
    <property type="component" value="Genome"/>
</dbReference>
<dbReference type="GO" id="GO:0042025">
    <property type="term" value="C:host cell nucleus"/>
    <property type="evidence" value="ECO:0007669"/>
    <property type="project" value="UniProtKB-SubCell"/>
</dbReference>
<dbReference type="GO" id="GO:0044423">
    <property type="term" value="C:virion component"/>
    <property type="evidence" value="ECO:0007669"/>
    <property type="project" value="UniProtKB-UniRule"/>
</dbReference>
<dbReference type="GO" id="GO:0039675">
    <property type="term" value="P:exit of virus from host cell nucleus through nuclear pore"/>
    <property type="evidence" value="ECO:0007669"/>
    <property type="project" value="UniProtKB-UniRule"/>
</dbReference>
<dbReference type="Gene3D" id="1.10.287.230">
    <property type="match status" value="1"/>
</dbReference>
<dbReference type="Gene3D" id="1.10.287.10">
    <property type="entry name" value="S15/NS1, RNA-binding"/>
    <property type="match status" value="1"/>
</dbReference>
<dbReference type="HAMAP" id="MF_04067">
    <property type="entry name" value="INFV_NEP"/>
    <property type="match status" value="1"/>
</dbReference>
<dbReference type="InterPro" id="IPR000968">
    <property type="entry name" value="Flu_NS2"/>
</dbReference>
<dbReference type="Pfam" id="PF00601">
    <property type="entry name" value="Flu_NS2"/>
    <property type="match status" value="1"/>
</dbReference>
<dbReference type="SUPFAM" id="SSF101156">
    <property type="entry name" value="Nonstructural protein ns2, Nep, M1-binding domain"/>
    <property type="match status" value="1"/>
</dbReference>
<feature type="chain" id="PRO_0000324208" description="Nuclear export protein">
    <location>
        <begin position="1"/>
        <end position="121"/>
    </location>
</feature>
<feature type="short sequence motif" description="Nuclear export signal" evidence="1">
    <location>
        <begin position="12"/>
        <end position="21"/>
    </location>
</feature>
<feature type="short sequence motif" description="Nuclear export signal" evidence="1">
    <location>
        <begin position="85"/>
        <end position="94"/>
    </location>
</feature>
<protein>
    <recommendedName>
        <fullName evidence="1">Nuclear export protein</fullName>
        <shortName evidence="1">NEP</shortName>
    </recommendedName>
    <alternativeName>
        <fullName evidence="1">Non-structural protein 2</fullName>
        <shortName evidence="1">NS2</shortName>
    </alternativeName>
</protein>
<gene>
    <name evidence="1" type="primary">NS</name>
</gene>
<sequence>MDSNTVSSFQDILLRMSKMQLGSSSEDLNGMITQFESLKLYRDSLGEAVMRMGDLHLLQNRNGKWREQLGQKFEEIRWLIEEVRHRLKTTENSFEQITFMQALQLLFEVEQEIRTFSFQLI</sequence>
<name>NEP_I72A4</name>
<evidence type="ECO:0000255" key="1">
    <source>
        <dbReference type="HAMAP-Rule" id="MF_04067"/>
    </source>
</evidence>
<comment type="function">
    <text evidence="1">Mediates the nuclear export of encapsidated genomic RNAs (ribonucleoproteins, RNPs). Acts as an adapter between viral RNPs complexes and the nuclear export machinery of the cell. Possesses no intrinsic RNA-binding activity, but includes a C-terminal M1-binding domain. This domain is believed to allow recognition of RNPs bound to the protein M1. Since protein M1 is not available in large quantities before late stages of infection, such an indirect recognition mechanism probably ensures that genomic RNPs are not exported from the host nucleus until sufficient quantities of viral mRNA and progeny genomic RNA have been synthesized. Furthermore, the RNPs enter the host cytoplasm only when associated with the M1 protein that is necessary to guide them to the plasma membrane. May down-regulate viral RNA synthesis when overproduced.</text>
</comment>
<comment type="subunit">
    <text evidence="1">Interacts with protein M1. May interact with host nucleoporin RAB/HRB and exportin XPO1/CRM1.</text>
</comment>
<comment type="subcellular location">
    <subcellularLocation>
        <location evidence="1">Virion</location>
    </subcellularLocation>
    <subcellularLocation>
        <location evidence="1">Host nucleus</location>
    </subcellularLocation>
</comment>
<comment type="alternative products">
    <event type="alternative splicing"/>
    <isoform>
        <id>Q2ICQ5-1</id>
        <name>NEP</name>
        <name>NS2</name>
        <sequence type="displayed"/>
    </isoform>
    <isoform>
        <id>Q2ICQ4-1</id>
        <name>NS1</name>
        <sequence type="external"/>
    </isoform>
</comment>
<comment type="similarity">
    <text evidence="1">Belongs to the influenza viruses NEP family.</text>
</comment>
<reference key="1">
    <citation type="submission" date="2006-02" db="EMBL/GenBank/DDBJ databases">
        <title>The NIAID influenza genome sequencing project.</title>
        <authorList>
            <person name="Ghedin E."/>
            <person name="Spiro D."/>
            <person name="Miller N."/>
            <person name="Zaborsky J."/>
            <person name="Feldblyum T."/>
            <person name="Subbu V."/>
            <person name="Shumway M."/>
            <person name="Sparenborg J."/>
            <person name="Groveman L."/>
            <person name="Halpin R."/>
            <person name="Sitz J."/>
            <person name="Koo H."/>
            <person name="Salzberg S.L."/>
            <person name="Webster R.G."/>
            <person name="Hoffmann E."/>
            <person name="Krauss S."/>
            <person name="Naeve C."/>
            <person name="Bao Y."/>
            <person name="Bolotov P."/>
            <person name="Dernovoy D."/>
            <person name="Kiryutin B."/>
            <person name="Lipman D.J."/>
            <person name="Tatusova T."/>
        </authorList>
    </citation>
    <scope>NUCLEOTIDE SEQUENCE [GENOMIC RNA]</scope>
</reference>